<feature type="chain" id="PRO_0000217163" description="Putative hydro-lyase BPP3031">
    <location>
        <begin position="1"/>
        <end position="277"/>
    </location>
</feature>
<evidence type="ECO:0000255" key="1">
    <source>
        <dbReference type="HAMAP-Rule" id="MF_01830"/>
    </source>
</evidence>
<sequence length="277" mass="29830">MRRPVPYHRVAAIMTILSLAGAGHQARLDARGGMLTGPTANLAPGHVQANLAILPQAVAGDFLRFCQRNPKPCPLLAVSEPGDPSLPELGLDIDIRTDVPRYRVWRDGKLVDEPLDVRGLWRDDLVAFLIGCSFSFEEAMLENGLPVRHIEQGCNVPMYRTNIATHPAGPFSGPLVVSMRPLKAADAIRAIQVTSRFPSVHGAPVHLGDPALIGIADLGRPDYGDAVEIRAGEIPVFWACGVTPQSVVAAVRPEFCITHAPGHMLVTDLLNSRLAAF</sequence>
<protein>
    <recommendedName>
        <fullName evidence="1">Putative hydro-lyase BPP3031</fullName>
        <ecNumber evidence="1">4.2.1.-</ecNumber>
    </recommendedName>
</protein>
<organism>
    <name type="scientific">Bordetella parapertussis (strain 12822 / ATCC BAA-587 / NCTC 13253)</name>
    <dbReference type="NCBI Taxonomy" id="257311"/>
    <lineage>
        <taxon>Bacteria</taxon>
        <taxon>Pseudomonadati</taxon>
        <taxon>Pseudomonadota</taxon>
        <taxon>Betaproteobacteria</taxon>
        <taxon>Burkholderiales</taxon>
        <taxon>Alcaligenaceae</taxon>
        <taxon>Bordetella</taxon>
    </lineage>
</organism>
<proteinExistence type="inferred from homology"/>
<comment type="similarity">
    <text evidence="1">Belongs to the D-glutamate cyclase family.</text>
</comment>
<name>Y3031_BORPA</name>
<dbReference type="EC" id="4.2.1.-" evidence="1"/>
<dbReference type="EMBL" id="BX640432">
    <property type="protein sequence ID" value="CAE38321.1"/>
    <property type="molecule type" value="Genomic_DNA"/>
</dbReference>
<dbReference type="SMR" id="Q7W690"/>
<dbReference type="KEGG" id="bpa:BPP3031"/>
<dbReference type="HOGENOM" id="CLU_059759_0_0_4"/>
<dbReference type="Proteomes" id="UP000001421">
    <property type="component" value="Chromosome"/>
</dbReference>
<dbReference type="GO" id="GO:0016829">
    <property type="term" value="F:lyase activity"/>
    <property type="evidence" value="ECO:0007669"/>
    <property type="project" value="UniProtKB-KW"/>
</dbReference>
<dbReference type="FunFam" id="3.30.2040.10:FF:000001">
    <property type="entry name" value="D-glutamate cyclase, mitochondrial"/>
    <property type="match status" value="1"/>
</dbReference>
<dbReference type="Gene3D" id="3.40.1640.10">
    <property type="entry name" value="PSTPO5379-like"/>
    <property type="match status" value="1"/>
</dbReference>
<dbReference type="Gene3D" id="3.30.2040.10">
    <property type="entry name" value="PSTPO5379-like domain"/>
    <property type="match status" value="1"/>
</dbReference>
<dbReference type="HAMAP" id="MF_01830">
    <property type="entry name" value="Hydro_lyase"/>
    <property type="match status" value="1"/>
</dbReference>
<dbReference type="InterPro" id="IPR009906">
    <property type="entry name" value="D-Glu_cyclase"/>
</dbReference>
<dbReference type="InterPro" id="IPR038021">
    <property type="entry name" value="Putative_hydro-lyase"/>
</dbReference>
<dbReference type="InterPro" id="IPR016938">
    <property type="entry name" value="UPF0317"/>
</dbReference>
<dbReference type="NCBIfam" id="NF003969">
    <property type="entry name" value="PRK05463.1"/>
    <property type="match status" value="1"/>
</dbReference>
<dbReference type="PANTHER" id="PTHR32022">
    <property type="entry name" value="D-GLUTAMATE CYCLASE, MITOCHONDRIAL"/>
    <property type="match status" value="1"/>
</dbReference>
<dbReference type="PANTHER" id="PTHR32022:SF10">
    <property type="entry name" value="D-GLUTAMATE CYCLASE, MITOCHONDRIAL"/>
    <property type="match status" value="1"/>
</dbReference>
<dbReference type="Pfam" id="PF07286">
    <property type="entry name" value="D-Glu_cyclase"/>
    <property type="match status" value="1"/>
</dbReference>
<dbReference type="PIRSF" id="PIRSF029755">
    <property type="entry name" value="UCP029755"/>
    <property type="match status" value="1"/>
</dbReference>
<dbReference type="SUPFAM" id="SSF160920">
    <property type="entry name" value="PSTPO5379-like"/>
    <property type="match status" value="1"/>
</dbReference>
<reference key="1">
    <citation type="journal article" date="2003" name="Nat. Genet.">
        <title>Comparative analysis of the genome sequences of Bordetella pertussis, Bordetella parapertussis and Bordetella bronchiseptica.</title>
        <authorList>
            <person name="Parkhill J."/>
            <person name="Sebaihia M."/>
            <person name="Preston A."/>
            <person name="Murphy L.D."/>
            <person name="Thomson N.R."/>
            <person name="Harris D.E."/>
            <person name="Holden M.T.G."/>
            <person name="Churcher C.M."/>
            <person name="Bentley S.D."/>
            <person name="Mungall K.L."/>
            <person name="Cerdeno-Tarraga A.-M."/>
            <person name="Temple L."/>
            <person name="James K.D."/>
            <person name="Harris B."/>
            <person name="Quail M.A."/>
            <person name="Achtman M."/>
            <person name="Atkin R."/>
            <person name="Baker S."/>
            <person name="Basham D."/>
            <person name="Bason N."/>
            <person name="Cherevach I."/>
            <person name="Chillingworth T."/>
            <person name="Collins M."/>
            <person name="Cronin A."/>
            <person name="Davis P."/>
            <person name="Doggett J."/>
            <person name="Feltwell T."/>
            <person name="Goble A."/>
            <person name="Hamlin N."/>
            <person name="Hauser H."/>
            <person name="Holroyd S."/>
            <person name="Jagels K."/>
            <person name="Leather S."/>
            <person name="Moule S."/>
            <person name="Norberczak H."/>
            <person name="O'Neil S."/>
            <person name="Ormond D."/>
            <person name="Price C."/>
            <person name="Rabbinowitsch E."/>
            <person name="Rutter S."/>
            <person name="Sanders M."/>
            <person name="Saunders D."/>
            <person name="Seeger K."/>
            <person name="Sharp S."/>
            <person name="Simmonds M."/>
            <person name="Skelton J."/>
            <person name="Squares R."/>
            <person name="Squares S."/>
            <person name="Stevens K."/>
            <person name="Unwin L."/>
            <person name="Whitehead S."/>
            <person name="Barrell B.G."/>
            <person name="Maskell D.J."/>
        </authorList>
    </citation>
    <scope>NUCLEOTIDE SEQUENCE [LARGE SCALE GENOMIC DNA]</scope>
    <source>
        <strain>12822 / ATCC BAA-587 / NCTC 13253</strain>
    </source>
</reference>
<keyword id="KW-0456">Lyase</keyword>
<accession>Q7W690</accession>
<gene>
    <name type="ordered locus">BPP3031</name>
</gene>